<proteinExistence type="inferred from homology"/>
<sequence>MTPIQEQLIALGGVFQAAVLVDRIAKTGQVSEAALSCMLGSLLVVDPKDTLDVYGGDDLNLHEGYRAMASALERDPATLQREPLRYALSMLGLERQLAKRDDLLEIIGRRIPVIQSQVEHFGIAHENVIAATGALYEDTLSTLRQRIQVQGDMRNLQQPNNASKIRAILLAGIRSARLWRQVDGHRWQLVFSRRKLLKELYPLLHG</sequence>
<gene>
    <name evidence="1" type="primary">hflD</name>
    <name type="ordered locus">PSPPH_3103</name>
</gene>
<feature type="chain" id="PRO_1000045428" description="High frequency lysogenization protein HflD homolog">
    <location>
        <begin position="1"/>
        <end position="206"/>
    </location>
</feature>
<keyword id="KW-0997">Cell inner membrane</keyword>
<keyword id="KW-1003">Cell membrane</keyword>
<keyword id="KW-0963">Cytoplasm</keyword>
<keyword id="KW-0472">Membrane</keyword>
<accession>Q48H60</accession>
<organism>
    <name type="scientific">Pseudomonas savastanoi pv. phaseolicola (strain 1448A / Race 6)</name>
    <name type="common">Pseudomonas syringae pv. phaseolicola (strain 1448A / Race 6)</name>
    <dbReference type="NCBI Taxonomy" id="264730"/>
    <lineage>
        <taxon>Bacteria</taxon>
        <taxon>Pseudomonadati</taxon>
        <taxon>Pseudomonadota</taxon>
        <taxon>Gammaproteobacteria</taxon>
        <taxon>Pseudomonadales</taxon>
        <taxon>Pseudomonadaceae</taxon>
        <taxon>Pseudomonas</taxon>
    </lineage>
</organism>
<dbReference type="EMBL" id="CP000058">
    <property type="protein sequence ID" value="AAZ34912.1"/>
    <property type="molecule type" value="Genomic_DNA"/>
</dbReference>
<dbReference type="RefSeq" id="WP_011168962.1">
    <property type="nucleotide sequence ID" value="NC_005773.3"/>
</dbReference>
<dbReference type="SMR" id="Q48H60"/>
<dbReference type="KEGG" id="psp:PSPPH_3103"/>
<dbReference type="eggNOG" id="COG2915">
    <property type="taxonomic scope" value="Bacteria"/>
</dbReference>
<dbReference type="HOGENOM" id="CLU_098920_0_0_6"/>
<dbReference type="Proteomes" id="UP000000551">
    <property type="component" value="Chromosome"/>
</dbReference>
<dbReference type="GO" id="GO:0005737">
    <property type="term" value="C:cytoplasm"/>
    <property type="evidence" value="ECO:0007669"/>
    <property type="project" value="UniProtKB-SubCell"/>
</dbReference>
<dbReference type="GO" id="GO:0005886">
    <property type="term" value="C:plasma membrane"/>
    <property type="evidence" value="ECO:0007669"/>
    <property type="project" value="UniProtKB-SubCell"/>
</dbReference>
<dbReference type="Gene3D" id="1.10.3890.10">
    <property type="entry name" value="HflD-like"/>
    <property type="match status" value="1"/>
</dbReference>
<dbReference type="HAMAP" id="MF_00695">
    <property type="entry name" value="HflD_protein"/>
    <property type="match status" value="1"/>
</dbReference>
<dbReference type="InterPro" id="IPR007451">
    <property type="entry name" value="HflD"/>
</dbReference>
<dbReference type="InterPro" id="IPR035932">
    <property type="entry name" value="HflD-like_sf"/>
</dbReference>
<dbReference type="NCBIfam" id="NF001246">
    <property type="entry name" value="PRK00218.1-2"/>
    <property type="match status" value="1"/>
</dbReference>
<dbReference type="NCBIfam" id="NF001247">
    <property type="entry name" value="PRK00218.1-3"/>
    <property type="match status" value="1"/>
</dbReference>
<dbReference type="PANTHER" id="PTHR38100">
    <property type="entry name" value="HIGH FREQUENCY LYSOGENIZATION PROTEIN HFLD"/>
    <property type="match status" value="1"/>
</dbReference>
<dbReference type="PANTHER" id="PTHR38100:SF1">
    <property type="entry name" value="HIGH FREQUENCY LYSOGENIZATION PROTEIN HFLD"/>
    <property type="match status" value="1"/>
</dbReference>
<dbReference type="Pfam" id="PF04356">
    <property type="entry name" value="DUF489"/>
    <property type="match status" value="1"/>
</dbReference>
<dbReference type="SUPFAM" id="SSF101322">
    <property type="entry name" value="YcfC-like"/>
    <property type="match status" value="1"/>
</dbReference>
<protein>
    <recommendedName>
        <fullName evidence="1">High frequency lysogenization protein HflD homolog</fullName>
    </recommendedName>
</protein>
<evidence type="ECO:0000255" key="1">
    <source>
        <dbReference type="HAMAP-Rule" id="MF_00695"/>
    </source>
</evidence>
<comment type="subcellular location">
    <subcellularLocation>
        <location>Cytoplasm</location>
    </subcellularLocation>
    <subcellularLocation>
        <location evidence="1">Cell inner membrane</location>
        <topology evidence="1">Peripheral membrane protein</topology>
        <orientation evidence="1">Cytoplasmic side</orientation>
    </subcellularLocation>
</comment>
<comment type="similarity">
    <text evidence="1">Belongs to the HflD family.</text>
</comment>
<reference key="1">
    <citation type="journal article" date="2005" name="J. Bacteriol.">
        <title>Whole-genome sequence analysis of Pseudomonas syringae pv. phaseolicola 1448A reveals divergence among pathovars in genes involved in virulence and transposition.</title>
        <authorList>
            <person name="Joardar V."/>
            <person name="Lindeberg M."/>
            <person name="Jackson R.W."/>
            <person name="Selengut J."/>
            <person name="Dodson R."/>
            <person name="Brinkac L.M."/>
            <person name="Daugherty S.C."/>
            <person name="DeBoy R.T."/>
            <person name="Durkin A.S."/>
            <person name="Gwinn Giglio M."/>
            <person name="Madupu R."/>
            <person name="Nelson W.C."/>
            <person name="Rosovitz M.J."/>
            <person name="Sullivan S.A."/>
            <person name="Crabtree J."/>
            <person name="Creasy T."/>
            <person name="Davidsen T.M."/>
            <person name="Haft D.H."/>
            <person name="Zafar N."/>
            <person name="Zhou L."/>
            <person name="Halpin R."/>
            <person name="Holley T."/>
            <person name="Khouri H.M."/>
            <person name="Feldblyum T.V."/>
            <person name="White O."/>
            <person name="Fraser C.M."/>
            <person name="Chatterjee A.K."/>
            <person name="Cartinhour S."/>
            <person name="Schneider D."/>
            <person name="Mansfield J.W."/>
            <person name="Collmer A."/>
            <person name="Buell R."/>
        </authorList>
    </citation>
    <scope>NUCLEOTIDE SEQUENCE [LARGE SCALE GENOMIC DNA]</scope>
    <source>
        <strain>1448A / Race 6</strain>
    </source>
</reference>
<name>HFLD_PSE14</name>